<reference key="1">
    <citation type="submission" date="2009-03" db="EMBL/GenBank/DDBJ databases">
        <title>Brucella melitensis ATCC 23457 whole genome shotgun sequencing project.</title>
        <authorList>
            <person name="Setubal J.C."/>
            <person name="Boyle S."/>
            <person name="Crasta O.R."/>
            <person name="Gillespie J.J."/>
            <person name="Kenyon R.W."/>
            <person name="Lu J."/>
            <person name="Mane S."/>
            <person name="Nagrani S."/>
            <person name="Shallom J.M."/>
            <person name="Shallom S."/>
            <person name="Shukla M."/>
            <person name="Snyder E.E."/>
            <person name="Sobral B.W."/>
            <person name="Wattam A.R."/>
            <person name="Will R."/>
            <person name="Williams K."/>
            <person name="Yoo H."/>
            <person name="Munk C."/>
            <person name="Tapia R."/>
            <person name="Han C."/>
            <person name="Detter J.C."/>
            <person name="Bruce D."/>
            <person name="Brettin T.S."/>
        </authorList>
    </citation>
    <scope>NUCLEOTIDE SEQUENCE [LARGE SCALE GENOMIC DNA]</scope>
    <source>
        <strain>ATCC 23457</strain>
    </source>
</reference>
<evidence type="ECO:0000255" key="1">
    <source>
        <dbReference type="HAMAP-Rule" id="MF_00539"/>
    </source>
</evidence>
<evidence type="ECO:0000256" key="2">
    <source>
        <dbReference type="SAM" id="MobiDB-lite"/>
    </source>
</evidence>
<evidence type="ECO:0000305" key="3"/>
<accession>C0RF97</accession>
<gene>
    <name evidence="1" type="primary">rpmA</name>
    <name type="ordered locus">BMEA_A1898</name>
</gene>
<feature type="chain" id="PRO_1000146513" description="Large ribosomal subunit protein bL27">
    <location>
        <begin position="1"/>
        <end position="89"/>
    </location>
</feature>
<feature type="region of interest" description="Disordered" evidence="2">
    <location>
        <begin position="1"/>
        <end position="22"/>
    </location>
</feature>
<organism>
    <name type="scientific">Brucella melitensis biotype 2 (strain ATCC 23457)</name>
    <dbReference type="NCBI Taxonomy" id="546272"/>
    <lineage>
        <taxon>Bacteria</taxon>
        <taxon>Pseudomonadati</taxon>
        <taxon>Pseudomonadota</taxon>
        <taxon>Alphaproteobacteria</taxon>
        <taxon>Hyphomicrobiales</taxon>
        <taxon>Brucellaceae</taxon>
        <taxon>Brucella/Ochrobactrum group</taxon>
        <taxon>Brucella</taxon>
    </lineage>
</organism>
<proteinExistence type="inferred from homology"/>
<dbReference type="EMBL" id="CP001488">
    <property type="protein sequence ID" value="ACO01569.1"/>
    <property type="molecule type" value="Genomic_DNA"/>
</dbReference>
<dbReference type="RefSeq" id="WP_002964927.1">
    <property type="nucleotide sequence ID" value="NC_012441.1"/>
</dbReference>
<dbReference type="SMR" id="C0RF97"/>
<dbReference type="GeneID" id="93017814"/>
<dbReference type="KEGG" id="bmi:BMEA_A1898"/>
<dbReference type="HOGENOM" id="CLU_095424_4_1_5"/>
<dbReference type="Proteomes" id="UP000001748">
    <property type="component" value="Chromosome I"/>
</dbReference>
<dbReference type="GO" id="GO:0022625">
    <property type="term" value="C:cytosolic large ribosomal subunit"/>
    <property type="evidence" value="ECO:0007669"/>
    <property type="project" value="TreeGrafter"/>
</dbReference>
<dbReference type="GO" id="GO:0003735">
    <property type="term" value="F:structural constituent of ribosome"/>
    <property type="evidence" value="ECO:0007669"/>
    <property type="project" value="InterPro"/>
</dbReference>
<dbReference type="GO" id="GO:0006412">
    <property type="term" value="P:translation"/>
    <property type="evidence" value="ECO:0007669"/>
    <property type="project" value="UniProtKB-UniRule"/>
</dbReference>
<dbReference type="FunFam" id="2.40.50.100:FF:000020">
    <property type="entry name" value="50S ribosomal protein L27"/>
    <property type="match status" value="1"/>
</dbReference>
<dbReference type="Gene3D" id="2.40.50.100">
    <property type="match status" value="1"/>
</dbReference>
<dbReference type="HAMAP" id="MF_00539">
    <property type="entry name" value="Ribosomal_bL27"/>
    <property type="match status" value="1"/>
</dbReference>
<dbReference type="InterPro" id="IPR001684">
    <property type="entry name" value="Ribosomal_bL27"/>
</dbReference>
<dbReference type="InterPro" id="IPR018261">
    <property type="entry name" value="Ribosomal_bL27_CS"/>
</dbReference>
<dbReference type="NCBIfam" id="TIGR00062">
    <property type="entry name" value="L27"/>
    <property type="match status" value="1"/>
</dbReference>
<dbReference type="PANTHER" id="PTHR15893:SF0">
    <property type="entry name" value="LARGE RIBOSOMAL SUBUNIT PROTEIN BL27M"/>
    <property type="match status" value="1"/>
</dbReference>
<dbReference type="PANTHER" id="PTHR15893">
    <property type="entry name" value="RIBOSOMAL PROTEIN L27"/>
    <property type="match status" value="1"/>
</dbReference>
<dbReference type="Pfam" id="PF01016">
    <property type="entry name" value="Ribosomal_L27"/>
    <property type="match status" value="1"/>
</dbReference>
<dbReference type="PRINTS" id="PR00063">
    <property type="entry name" value="RIBOSOMALL27"/>
</dbReference>
<dbReference type="SUPFAM" id="SSF110324">
    <property type="entry name" value="Ribosomal L27 protein-like"/>
    <property type="match status" value="1"/>
</dbReference>
<dbReference type="PROSITE" id="PS00831">
    <property type="entry name" value="RIBOSOMAL_L27"/>
    <property type="match status" value="1"/>
</dbReference>
<comment type="similarity">
    <text evidence="1">Belongs to the bacterial ribosomal protein bL27 family.</text>
</comment>
<sequence>MAHKKAGGSSRNGRDSESKRLGVKKFGGEAVLAGNIIVRQRGTKWHPGANVGLGKDHTIFATVNGSVSFRTKANGRTYVSVNPIAEAAE</sequence>
<name>RL27_BRUMB</name>
<protein>
    <recommendedName>
        <fullName evidence="1">Large ribosomal subunit protein bL27</fullName>
    </recommendedName>
    <alternativeName>
        <fullName evidence="3">50S ribosomal protein L27</fullName>
    </alternativeName>
</protein>
<keyword id="KW-0687">Ribonucleoprotein</keyword>
<keyword id="KW-0689">Ribosomal protein</keyword>